<gene>
    <name type="primary">LMF2</name>
    <name type="synonym">TMEM112B</name>
    <name type="synonym">TMEM153</name>
</gene>
<reference key="1">
    <citation type="journal article" date="2004" name="Genome Biol.">
        <title>A genome annotation-driven approach to cloning the human ORFeome.</title>
        <authorList>
            <person name="Collins J.E."/>
            <person name="Wright C.L."/>
            <person name="Edwards C.A."/>
            <person name="Davis M.P."/>
            <person name="Grinham J.A."/>
            <person name="Cole C.G."/>
            <person name="Goward M.E."/>
            <person name="Aguado B."/>
            <person name="Mallya M."/>
            <person name="Mokrab Y."/>
            <person name="Huckle E.J."/>
            <person name="Beare D.M."/>
            <person name="Dunham I."/>
        </authorList>
    </citation>
    <scope>NUCLEOTIDE SEQUENCE [LARGE SCALE MRNA] (ISOFORM 1)</scope>
</reference>
<reference key="2">
    <citation type="journal article" date="1999" name="Nature">
        <title>The DNA sequence of human chromosome 22.</title>
        <authorList>
            <person name="Dunham I."/>
            <person name="Hunt A.R."/>
            <person name="Collins J.E."/>
            <person name="Bruskiewich R."/>
            <person name="Beare D.M."/>
            <person name="Clamp M."/>
            <person name="Smink L.J."/>
            <person name="Ainscough R."/>
            <person name="Almeida J.P."/>
            <person name="Babbage A.K."/>
            <person name="Bagguley C."/>
            <person name="Bailey J."/>
            <person name="Barlow K.F."/>
            <person name="Bates K.N."/>
            <person name="Beasley O.P."/>
            <person name="Bird C.P."/>
            <person name="Blakey S.E."/>
            <person name="Bridgeman A.M."/>
            <person name="Buck D."/>
            <person name="Burgess J."/>
            <person name="Burrill W.D."/>
            <person name="Burton J."/>
            <person name="Carder C."/>
            <person name="Carter N.P."/>
            <person name="Chen Y."/>
            <person name="Clark G."/>
            <person name="Clegg S.M."/>
            <person name="Cobley V.E."/>
            <person name="Cole C.G."/>
            <person name="Collier R.E."/>
            <person name="Connor R."/>
            <person name="Conroy D."/>
            <person name="Corby N.R."/>
            <person name="Coville G.J."/>
            <person name="Cox A.V."/>
            <person name="Davis J."/>
            <person name="Dawson E."/>
            <person name="Dhami P.D."/>
            <person name="Dockree C."/>
            <person name="Dodsworth S.J."/>
            <person name="Durbin R.M."/>
            <person name="Ellington A.G."/>
            <person name="Evans K.L."/>
            <person name="Fey J.M."/>
            <person name="Fleming K."/>
            <person name="French L."/>
            <person name="Garner A.A."/>
            <person name="Gilbert J.G.R."/>
            <person name="Goward M.E."/>
            <person name="Grafham D.V."/>
            <person name="Griffiths M.N.D."/>
            <person name="Hall C."/>
            <person name="Hall R.E."/>
            <person name="Hall-Tamlyn G."/>
            <person name="Heathcott R.W."/>
            <person name="Ho S."/>
            <person name="Holmes S."/>
            <person name="Hunt S.E."/>
            <person name="Jones M.C."/>
            <person name="Kershaw J."/>
            <person name="Kimberley A.M."/>
            <person name="King A."/>
            <person name="Laird G.K."/>
            <person name="Langford C.F."/>
            <person name="Leversha M.A."/>
            <person name="Lloyd C."/>
            <person name="Lloyd D.M."/>
            <person name="Martyn I.D."/>
            <person name="Mashreghi-Mohammadi M."/>
            <person name="Matthews L.H."/>
            <person name="Mccann O.T."/>
            <person name="Mcclay J."/>
            <person name="Mclaren S."/>
            <person name="McMurray A.A."/>
            <person name="Milne S.A."/>
            <person name="Mortimore B.J."/>
            <person name="Odell C.N."/>
            <person name="Pavitt R."/>
            <person name="Pearce A.V."/>
            <person name="Pearson D."/>
            <person name="Phillimore B.J.C.T."/>
            <person name="Phillips S.H."/>
            <person name="Plumb R.W."/>
            <person name="Ramsay H."/>
            <person name="Ramsey Y."/>
            <person name="Rogers L."/>
            <person name="Ross M.T."/>
            <person name="Scott C.E."/>
            <person name="Sehra H.K."/>
            <person name="Skuce C.D."/>
            <person name="Smalley S."/>
            <person name="Smith M.L."/>
            <person name="Soderlund C."/>
            <person name="Spragon L."/>
            <person name="Steward C.A."/>
            <person name="Sulston J.E."/>
            <person name="Swann R.M."/>
            <person name="Vaudin M."/>
            <person name="Wall M."/>
            <person name="Wallis J.M."/>
            <person name="Whiteley M.N."/>
            <person name="Willey D.L."/>
            <person name="Williams L."/>
            <person name="Williams S.A."/>
            <person name="Williamson H."/>
            <person name="Wilmer T.E."/>
            <person name="Wilming L."/>
            <person name="Wright C.L."/>
            <person name="Hubbard T."/>
            <person name="Bentley D.R."/>
            <person name="Beck S."/>
            <person name="Rogers J."/>
            <person name="Shimizu N."/>
            <person name="Minoshima S."/>
            <person name="Kawasaki K."/>
            <person name="Sasaki T."/>
            <person name="Asakawa S."/>
            <person name="Kudoh J."/>
            <person name="Shintani A."/>
            <person name="Shibuya K."/>
            <person name="Yoshizaki Y."/>
            <person name="Aoki N."/>
            <person name="Mitsuyama S."/>
            <person name="Roe B.A."/>
            <person name="Chen F."/>
            <person name="Chu L."/>
            <person name="Crabtree J."/>
            <person name="Deschamps S."/>
            <person name="Do A."/>
            <person name="Do T."/>
            <person name="Dorman A."/>
            <person name="Fang F."/>
            <person name="Fu Y."/>
            <person name="Hu P."/>
            <person name="Hua A."/>
            <person name="Kenton S."/>
            <person name="Lai H."/>
            <person name="Lao H.I."/>
            <person name="Lewis J."/>
            <person name="Lewis S."/>
            <person name="Lin S.-P."/>
            <person name="Loh P."/>
            <person name="Malaj E."/>
            <person name="Nguyen T."/>
            <person name="Pan H."/>
            <person name="Phan S."/>
            <person name="Qi S."/>
            <person name="Qian Y."/>
            <person name="Ray L."/>
            <person name="Ren Q."/>
            <person name="Shaull S."/>
            <person name="Sloan D."/>
            <person name="Song L."/>
            <person name="Wang Q."/>
            <person name="Wang Y."/>
            <person name="Wang Z."/>
            <person name="White J."/>
            <person name="Willingham D."/>
            <person name="Wu H."/>
            <person name="Yao Z."/>
            <person name="Zhan M."/>
            <person name="Zhang G."/>
            <person name="Chissoe S."/>
            <person name="Murray J."/>
            <person name="Miller N."/>
            <person name="Minx P."/>
            <person name="Fulton R."/>
            <person name="Johnson D."/>
            <person name="Bemis G."/>
            <person name="Bentley D."/>
            <person name="Bradshaw H."/>
            <person name="Bourne S."/>
            <person name="Cordes M."/>
            <person name="Du Z."/>
            <person name="Fulton L."/>
            <person name="Goela D."/>
            <person name="Graves T."/>
            <person name="Hawkins J."/>
            <person name="Hinds K."/>
            <person name="Kemp K."/>
            <person name="Latreille P."/>
            <person name="Layman D."/>
            <person name="Ozersky P."/>
            <person name="Rohlfing T."/>
            <person name="Scheet P."/>
            <person name="Walker C."/>
            <person name="Wamsley A."/>
            <person name="Wohldmann P."/>
            <person name="Pepin K."/>
            <person name="Nelson J."/>
            <person name="Korf I."/>
            <person name="Bedell J.A."/>
            <person name="Hillier L.W."/>
            <person name="Mardis E."/>
            <person name="Waterston R."/>
            <person name="Wilson R."/>
            <person name="Emanuel B.S."/>
            <person name="Shaikh T."/>
            <person name="Kurahashi H."/>
            <person name="Saitta S."/>
            <person name="Budarf M.L."/>
            <person name="McDermid H.E."/>
            <person name="Johnson A."/>
            <person name="Wong A.C.C."/>
            <person name="Morrow B.E."/>
            <person name="Edelmann L."/>
            <person name="Kim U.J."/>
            <person name="Shizuya H."/>
            <person name="Simon M.I."/>
            <person name="Dumanski J.P."/>
            <person name="Peyrard M."/>
            <person name="Kedra D."/>
            <person name="Seroussi E."/>
            <person name="Fransson I."/>
            <person name="Tapia I."/>
            <person name="Bruder C.E."/>
            <person name="O'Brien K.P."/>
            <person name="Wilkinson P."/>
            <person name="Bodenteich A."/>
            <person name="Hartman K."/>
            <person name="Hu X."/>
            <person name="Khan A.S."/>
            <person name="Lane L."/>
            <person name="Tilahun Y."/>
            <person name="Wright H."/>
        </authorList>
    </citation>
    <scope>NUCLEOTIDE SEQUENCE [LARGE SCALE GENOMIC DNA]</scope>
</reference>
<reference key="3">
    <citation type="journal article" date="2004" name="Genome Res.">
        <title>The status, quality, and expansion of the NIH full-length cDNA project: the Mammalian Gene Collection (MGC).</title>
        <authorList>
            <consortium name="The MGC Project Team"/>
        </authorList>
    </citation>
    <scope>NUCLEOTIDE SEQUENCE [LARGE SCALE MRNA] (ISOFORMS 1 AND 2)</scope>
    <source>
        <tissue>Kidney</tissue>
        <tissue>Skin</tissue>
    </source>
</reference>
<reference key="4">
    <citation type="journal article" date="2004" name="Nat. Genet.">
        <title>Complete sequencing and characterization of 21,243 full-length human cDNAs.</title>
        <authorList>
            <person name="Ota T."/>
            <person name="Suzuki Y."/>
            <person name="Nishikawa T."/>
            <person name="Otsuki T."/>
            <person name="Sugiyama T."/>
            <person name="Irie R."/>
            <person name="Wakamatsu A."/>
            <person name="Hayashi K."/>
            <person name="Sato H."/>
            <person name="Nagai K."/>
            <person name="Kimura K."/>
            <person name="Makita H."/>
            <person name="Sekine M."/>
            <person name="Obayashi M."/>
            <person name="Nishi T."/>
            <person name="Shibahara T."/>
            <person name="Tanaka T."/>
            <person name="Ishii S."/>
            <person name="Yamamoto J."/>
            <person name="Saito K."/>
            <person name="Kawai Y."/>
            <person name="Isono Y."/>
            <person name="Nakamura Y."/>
            <person name="Nagahari K."/>
            <person name="Murakami K."/>
            <person name="Yasuda T."/>
            <person name="Iwayanagi T."/>
            <person name="Wagatsuma M."/>
            <person name="Shiratori A."/>
            <person name="Sudo H."/>
            <person name="Hosoiri T."/>
            <person name="Kaku Y."/>
            <person name="Kodaira H."/>
            <person name="Kondo H."/>
            <person name="Sugawara M."/>
            <person name="Takahashi M."/>
            <person name="Kanda K."/>
            <person name="Yokoi T."/>
            <person name="Furuya T."/>
            <person name="Kikkawa E."/>
            <person name="Omura Y."/>
            <person name="Abe K."/>
            <person name="Kamihara K."/>
            <person name="Katsuta N."/>
            <person name="Sato K."/>
            <person name="Tanikawa M."/>
            <person name="Yamazaki M."/>
            <person name="Ninomiya K."/>
            <person name="Ishibashi T."/>
            <person name="Yamashita H."/>
            <person name="Murakawa K."/>
            <person name="Fujimori K."/>
            <person name="Tanai H."/>
            <person name="Kimata M."/>
            <person name="Watanabe M."/>
            <person name="Hiraoka S."/>
            <person name="Chiba Y."/>
            <person name="Ishida S."/>
            <person name="Ono Y."/>
            <person name="Takiguchi S."/>
            <person name="Watanabe S."/>
            <person name="Yosida M."/>
            <person name="Hotuta T."/>
            <person name="Kusano J."/>
            <person name="Kanehori K."/>
            <person name="Takahashi-Fujii A."/>
            <person name="Hara H."/>
            <person name="Tanase T.-O."/>
            <person name="Nomura Y."/>
            <person name="Togiya S."/>
            <person name="Komai F."/>
            <person name="Hara R."/>
            <person name="Takeuchi K."/>
            <person name="Arita M."/>
            <person name="Imose N."/>
            <person name="Musashino K."/>
            <person name="Yuuki H."/>
            <person name="Oshima A."/>
            <person name="Sasaki N."/>
            <person name="Aotsuka S."/>
            <person name="Yoshikawa Y."/>
            <person name="Matsunawa H."/>
            <person name="Ichihara T."/>
            <person name="Shiohata N."/>
            <person name="Sano S."/>
            <person name="Moriya S."/>
            <person name="Momiyama H."/>
            <person name="Satoh N."/>
            <person name="Takami S."/>
            <person name="Terashima Y."/>
            <person name="Suzuki O."/>
            <person name="Nakagawa S."/>
            <person name="Senoh A."/>
            <person name="Mizoguchi H."/>
            <person name="Goto Y."/>
            <person name="Shimizu F."/>
            <person name="Wakebe H."/>
            <person name="Hishigaki H."/>
            <person name="Watanabe T."/>
            <person name="Sugiyama A."/>
            <person name="Takemoto M."/>
            <person name="Kawakami B."/>
            <person name="Yamazaki M."/>
            <person name="Watanabe K."/>
            <person name="Kumagai A."/>
            <person name="Itakura S."/>
            <person name="Fukuzumi Y."/>
            <person name="Fujimori Y."/>
            <person name="Komiyama M."/>
            <person name="Tashiro H."/>
            <person name="Tanigami A."/>
            <person name="Fujiwara T."/>
            <person name="Ono T."/>
            <person name="Yamada K."/>
            <person name="Fujii Y."/>
            <person name="Ozaki K."/>
            <person name="Hirao M."/>
            <person name="Ohmori Y."/>
            <person name="Kawabata A."/>
            <person name="Hikiji T."/>
            <person name="Kobatake N."/>
            <person name="Inagaki H."/>
            <person name="Ikema Y."/>
            <person name="Okamoto S."/>
            <person name="Okitani R."/>
            <person name="Kawakami T."/>
            <person name="Noguchi S."/>
            <person name="Itoh T."/>
            <person name="Shigeta K."/>
            <person name="Senba T."/>
            <person name="Matsumura K."/>
            <person name="Nakajima Y."/>
            <person name="Mizuno T."/>
            <person name="Morinaga M."/>
            <person name="Sasaki M."/>
            <person name="Togashi T."/>
            <person name="Oyama M."/>
            <person name="Hata H."/>
            <person name="Watanabe M."/>
            <person name="Komatsu T."/>
            <person name="Mizushima-Sugano J."/>
            <person name="Satoh T."/>
            <person name="Shirai Y."/>
            <person name="Takahashi Y."/>
            <person name="Nakagawa K."/>
            <person name="Okumura K."/>
            <person name="Nagase T."/>
            <person name="Nomura N."/>
            <person name="Kikuchi H."/>
            <person name="Masuho Y."/>
            <person name="Yamashita R."/>
            <person name="Nakai K."/>
            <person name="Yada T."/>
            <person name="Nakamura Y."/>
            <person name="Ohara O."/>
            <person name="Isogai T."/>
            <person name="Sugano S."/>
        </authorList>
    </citation>
    <scope>NUCLEOTIDE SEQUENCE [LARGE SCALE MRNA] OF 317-707 (ISOFORM 3)</scope>
    <source>
        <tissue>Thymus</tissue>
    </source>
</reference>
<reference key="5">
    <citation type="journal article" date="2007" name="Nat. Genet.">
        <title>Mutations in LMF1 cause combined lipase deficiency and severe hypertriglyceridemia.</title>
        <authorList>
            <person name="Peterfy M."/>
            <person name="Ben-Zeev O."/>
            <person name="Mao H.Z."/>
            <person name="Weissglas-Volkov D."/>
            <person name="Aouizerat B.E."/>
            <person name="Pullinger C.R."/>
            <person name="Frost P.H."/>
            <person name="Kane J.P."/>
            <person name="Malloy M.J."/>
            <person name="Reue K."/>
            <person name="Pajukanta P."/>
            <person name="Doolittle M.H."/>
        </authorList>
    </citation>
    <scope>IDENTIFICATION</scope>
</reference>
<reference key="6">
    <citation type="journal article" date="2008" name="Mol. Cell">
        <title>Kinase-selective enrichment enables quantitative phosphoproteomics of the kinome across the cell cycle.</title>
        <authorList>
            <person name="Daub H."/>
            <person name="Olsen J.V."/>
            <person name="Bairlein M."/>
            <person name="Gnad F."/>
            <person name="Oppermann F.S."/>
            <person name="Korner R."/>
            <person name="Greff Z."/>
            <person name="Keri G."/>
            <person name="Stemmann O."/>
            <person name="Mann M."/>
        </authorList>
    </citation>
    <scope>IDENTIFICATION BY MASS SPECTROMETRY [LARGE SCALE ANALYSIS]</scope>
    <source>
        <tissue>Cervix carcinoma</tissue>
    </source>
</reference>
<reference key="7">
    <citation type="journal article" date="2006" name="Science">
        <title>The consensus coding sequences of human breast and colorectal cancers.</title>
        <authorList>
            <person name="Sjoeblom T."/>
            <person name="Jones S."/>
            <person name="Wood L.D."/>
            <person name="Parsons D.W."/>
            <person name="Lin J."/>
            <person name="Barber T.D."/>
            <person name="Mandelker D."/>
            <person name="Leary R.J."/>
            <person name="Ptak J."/>
            <person name="Silliman N."/>
            <person name="Szabo S."/>
            <person name="Buckhaults P."/>
            <person name="Farrell C."/>
            <person name="Meeh P."/>
            <person name="Markowitz S.D."/>
            <person name="Willis J."/>
            <person name="Dawson D."/>
            <person name="Willson J.K.V."/>
            <person name="Gazdar A.F."/>
            <person name="Hartigan J."/>
            <person name="Wu L."/>
            <person name="Liu C."/>
            <person name="Parmigiani G."/>
            <person name="Park B.H."/>
            <person name="Bachman K.E."/>
            <person name="Papadopoulos N."/>
            <person name="Vogelstein B."/>
            <person name="Kinzler K.W."/>
            <person name="Velculescu V.E."/>
        </authorList>
    </citation>
    <scope>VARIANT [LARGE SCALE ANALYSIS] LEU-68</scope>
</reference>
<protein>
    <recommendedName>
        <fullName>Lipase maturation factor 2</fullName>
    </recommendedName>
    <alternativeName>
        <fullName>Transmembrane protein 112B</fullName>
    </alternativeName>
    <alternativeName>
        <fullName>Transmembrane protein 153</fullName>
    </alternativeName>
</protein>
<proteinExistence type="evidence at protein level"/>
<comment type="function">
    <text evidence="1">Involved in the maturation of specific proteins in the endoplasmic reticulum. May be required for maturation and transport of active lipoprotein lipase (LPL) through the secretory pathway (By similarity).</text>
</comment>
<comment type="interaction">
    <interactant intactId="EBI-10298556">
        <id>Q9BU23</id>
    </interactant>
    <interactant intactId="EBI-739580">
        <id>Q13137</id>
        <label>CALCOCO2</label>
    </interactant>
    <organismsDiffer>false</organismsDiffer>
    <experiments>3</experiments>
</comment>
<comment type="interaction">
    <interactant intactId="EBI-10298556">
        <id>Q9BU23</id>
    </interactant>
    <interactant intactId="EBI-948001">
        <id>Q15323</id>
        <label>KRT31</label>
    </interactant>
    <organismsDiffer>false</organismsDiffer>
    <experiments>3</experiments>
</comment>
<comment type="interaction">
    <interactant intactId="EBI-10298556">
        <id>Q9BU23</id>
    </interactant>
    <interactant intactId="EBI-10171697">
        <id>Q6A162</id>
        <label>KRT40</label>
    </interactant>
    <organismsDiffer>false</organismsDiffer>
    <experiments>3</experiments>
</comment>
<comment type="interaction">
    <interactant intactId="EBI-12132296">
        <id>Q9BU23-2</id>
    </interactant>
    <interactant intactId="EBI-3867333">
        <id>A8MQ03</id>
        <label>CYSRT1</label>
    </interactant>
    <organismsDiffer>false</organismsDiffer>
    <experiments>3</experiments>
</comment>
<comment type="interaction">
    <interactant intactId="EBI-12132296">
        <id>Q9BU23-2</id>
    </interactant>
    <interactant intactId="EBI-10171774">
        <id>P60410</id>
        <label>KRTAP10-8</label>
    </interactant>
    <organismsDiffer>false</organismsDiffer>
    <experiments>3</experiments>
</comment>
<comment type="subcellular location">
    <subcellularLocation>
        <location evidence="1">Endoplasmic reticulum membrane</location>
        <topology evidence="1">Multi-pass membrane protein</topology>
    </subcellularLocation>
</comment>
<comment type="alternative products">
    <event type="alternative splicing"/>
    <isoform>
        <id>Q9BU23-1</id>
        <name>1</name>
        <sequence type="displayed"/>
    </isoform>
    <isoform>
        <id>Q9BU23-2</id>
        <name>2</name>
        <sequence type="described" ref="VSP_032254"/>
    </isoform>
    <isoform>
        <id>Q9BU23-3</id>
        <name>3</name>
        <sequence type="described" ref="VSP_032255"/>
    </isoform>
</comment>
<comment type="similarity">
    <text evidence="7">Belongs to the lipase maturation factor family.</text>
</comment>
<comment type="sequence caution" evidence="7">
    <conflict type="erroneous gene model prediction">
        <sequence resource="EMBL-CDS" id="AAB03346"/>
    </conflict>
</comment>
<comment type="sequence caution" evidence="7">
    <conflict type="miscellaneous discrepancy">
        <sequence resource="EMBL-CDS" id="BAC85437"/>
    </conflict>
    <text>Chimeric cDNA.</text>
</comment>
<organism>
    <name type="scientific">Homo sapiens</name>
    <name type="common">Human</name>
    <dbReference type="NCBI Taxonomy" id="9606"/>
    <lineage>
        <taxon>Eukaryota</taxon>
        <taxon>Metazoa</taxon>
        <taxon>Chordata</taxon>
        <taxon>Craniata</taxon>
        <taxon>Vertebrata</taxon>
        <taxon>Euteleostomi</taxon>
        <taxon>Mammalia</taxon>
        <taxon>Eutheria</taxon>
        <taxon>Euarchontoglires</taxon>
        <taxon>Primates</taxon>
        <taxon>Haplorrhini</taxon>
        <taxon>Catarrhini</taxon>
        <taxon>Hominidae</taxon>
        <taxon>Homo</taxon>
    </lineage>
</organism>
<name>LMF2_HUMAN</name>
<dbReference type="EMBL" id="CR456605">
    <property type="protein sequence ID" value="CAG30491.1"/>
    <property type="molecule type" value="mRNA"/>
</dbReference>
<dbReference type="EMBL" id="U62317">
    <property type="protein sequence ID" value="AAB03346.1"/>
    <property type="status" value="ALT_SEQ"/>
    <property type="molecule type" value="Genomic_DNA"/>
</dbReference>
<dbReference type="EMBL" id="BC002942">
    <property type="protein sequence ID" value="AAH02942.2"/>
    <property type="molecule type" value="mRNA"/>
</dbReference>
<dbReference type="EMBL" id="BC014652">
    <property type="protein sequence ID" value="AAH14652.1"/>
    <property type="molecule type" value="mRNA"/>
</dbReference>
<dbReference type="EMBL" id="BC021143">
    <property type="protein sequence ID" value="AAH21143.1"/>
    <property type="molecule type" value="mRNA"/>
</dbReference>
<dbReference type="EMBL" id="AK130818">
    <property type="protein sequence ID" value="BAC85437.1"/>
    <property type="status" value="ALT_SEQ"/>
    <property type="molecule type" value="mRNA"/>
</dbReference>
<dbReference type="CCDS" id="CCDS14093.2">
    <molecule id="Q9BU23-1"/>
</dbReference>
<dbReference type="CCDS" id="CCDS87035.1">
    <molecule id="Q9BU23-2"/>
</dbReference>
<dbReference type="RefSeq" id="NP_001350745.1">
    <molecule id="Q9BU23-2"/>
    <property type="nucleotide sequence ID" value="NM_001363816.2"/>
</dbReference>
<dbReference type="RefSeq" id="NP_149977.2">
    <molecule id="Q9BU23-1"/>
    <property type="nucleotide sequence ID" value="NM_033200.3"/>
</dbReference>
<dbReference type="RefSeq" id="XP_005262012.1">
    <property type="nucleotide sequence ID" value="XM_005261955.3"/>
</dbReference>
<dbReference type="SMR" id="Q9BU23"/>
<dbReference type="BioGRID" id="124811">
    <property type="interactions" value="128"/>
</dbReference>
<dbReference type="FunCoup" id="Q9BU23">
    <property type="interactions" value="903"/>
</dbReference>
<dbReference type="IntAct" id="Q9BU23">
    <property type="interactions" value="57"/>
</dbReference>
<dbReference type="MINT" id="Q9BU23"/>
<dbReference type="STRING" id="9606.ENSP00000424381"/>
<dbReference type="GlyConnect" id="1457">
    <property type="glycosylation" value="1 N-Linked glycan (1 site)"/>
</dbReference>
<dbReference type="GlyCosmos" id="Q9BU23">
    <property type="glycosylation" value="2 sites, 1 glycan"/>
</dbReference>
<dbReference type="GlyGen" id="Q9BU23">
    <property type="glycosylation" value="3 sites, 8 N-linked glycans (2 sites), 1 O-linked glycan (1 site)"/>
</dbReference>
<dbReference type="iPTMnet" id="Q9BU23"/>
<dbReference type="PhosphoSitePlus" id="Q9BU23"/>
<dbReference type="SwissPalm" id="Q9BU23"/>
<dbReference type="BioMuta" id="LMF2"/>
<dbReference type="DMDM" id="74733167"/>
<dbReference type="jPOST" id="Q9BU23"/>
<dbReference type="MassIVE" id="Q9BU23"/>
<dbReference type="PaxDb" id="9606-ENSP00000424381"/>
<dbReference type="PeptideAtlas" id="Q9BU23"/>
<dbReference type="ProteomicsDB" id="79046">
    <molecule id="Q9BU23-1"/>
</dbReference>
<dbReference type="ProteomicsDB" id="79047">
    <molecule id="Q9BU23-2"/>
</dbReference>
<dbReference type="ProteomicsDB" id="79048">
    <molecule id="Q9BU23-3"/>
</dbReference>
<dbReference type="Pumba" id="Q9BU23"/>
<dbReference type="Antibodypedia" id="28648">
    <property type="antibodies" value="120 antibodies from 20 providers"/>
</dbReference>
<dbReference type="DNASU" id="91289"/>
<dbReference type="Ensembl" id="ENST00000216080.5">
    <molecule id="Q9BU23-2"/>
    <property type="protein sequence ID" value="ENSP00000216080.5"/>
    <property type="gene ID" value="ENSG00000100258.18"/>
</dbReference>
<dbReference type="Ensembl" id="ENST00000474879.7">
    <molecule id="Q9BU23-1"/>
    <property type="protein sequence ID" value="ENSP00000424381.1"/>
    <property type="gene ID" value="ENSG00000100258.18"/>
</dbReference>
<dbReference type="GeneID" id="91289"/>
<dbReference type="KEGG" id="hsa:91289"/>
<dbReference type="MANE-Select" id="ENST00000474879.7">
    <property type="protein sequence ID" value="ENSP00000424381.1"/>
    <property type="RefSeq nucleotide sequence ID" value="NM_033200.3"/>
    <property type="RefSeq protein sequence ID" value="NP_149977.2"/>
</dbReference>
<dbReference type="UCSC" id="uc003blo.3">
    <molecule id="Q9BU23-1"/>
    <property type="organism name" value="human"/>
</dbReference>
<dbReference type="AGR" id="HGNC:25096"/>
<dbReference type="CTD" id="91289"/>
<dbReference type="DisGeNET" id="91289"/>
<dbReference type="GeneCards" id="LMF2"/>
<dbReference type="HGNC" id="HGNC:25096">
    <property type="gene designation" value="LMF2"/>
</dbReference>
<dbReference type="HPA" id="ENSG00000100258">
    <property type="expression patterns" value="Tissue enhanced (pancreas)"/>
</dbReference>
<dbReference type="neXtProt" id="NX_Q9BU23"/>
<dbReference type="OpenTargets" id="ENSG00000100258"/>
<dbReference type="PharmGKB" id="PA162394144"/>
<dbReference type="VEuPathDB" id="HostDB:ENSG00000100258"/>
<dbReference type="eggNOG" id="ENOG502QTN6">
    <property type="taxonomic scope" value="Eukaryota"/>
</dbReference>
<dbReference type="GeneTree" id="ENSGT00530000063702"/>
<dbReference type="HOGENOM" id="CLU_020557_1_0_1"/>
<dbReference type="InParanoid" id="Q9BU23"/>
<dbReference type="OMA" id="HYTPWSQ"/>
<dbReference type="OrthoDB" id="5988002at2759"/>
<dbReference type="PAN-GO" id="Q9BU23">
    <property type="GO annotations" value="2 GO annotations based on evolutionary models"/>
</dbReference>
<dbReference type="PhylomeDB" id="Q9BU23"/>
<dbReference type="TreeFam" id="TF314339"/>
<dbReference type="PathwayCommons" id="Q9BU23"/>
<dbReference type="Reactome" id="R-HSA-8963889">
    <property type="pathway name" value="Assembly of active LPL and LIPC lipase complexes"/>
</dbReference>
<dbReference type="SignaLink" id="Q9BU23"/>
<dbReference type="BioGRID-ORCS" id="91289">
    <property type="hits" value="12 hits in 1162 CRISPR screens"/>
</dbReference>
<dbReference type="ChiTaRS" id="LMF2">
    <property type="organism name" value="human"/>
</dbReference>
<dbReference type="GenomeRNAi" id="91289"/>
<dbReference type="Pharos" id="Q9BU23">
    <property type="development level" value="Tbio"/>
</dbReference>
<dbReference type="PRO" id="PR:Q9BU23"/>
<dbReference type="Proteomes" id="UP000005640">
    <property type="component" value="Chromosome 22"/>
</dbReference>
<dbReference type="RNAct" id="Q9BU23">
    <property type="molecule type" value="protein"/>
</dbReference>
<dbReference type="Bgee" id="ENSG00000100258">
    <property type="expression patterns" value="Expressed in body of pancreas and 179 other cell types or tissues"/>
</dbReference>
<dbReference type="GO" id="GO:0005789">
    <property type="term" value="C:endoplasmic reticulum membrane"/>
    <property type="evidence" value="ECO:0000318"/>
    <property type="project" value="GO_Central"/>
</dbReference>
<dbReference type="GO" id="GO:0016020">
    <property type="term" value="C:membrane"/>
    <property type="evidence" value="ECO:0007005"/>
    <property type="project" value="UniProtKB"/>
</dbReference>
<dbReference type="GO" id="GO:0051604">
    <property type="term" value="P:protein maturation"/>
    <property type="evidence" value="ECO:0000318"/>
    <property type="project" value="GO_Central"/>
</dbReference>
<dbReference type="InterPro" id="IPR009613">
    <property type="entry name" value="LMF"/>
</dbReference>
<dbReference type="PANTHER" id="PTHR14463">
    <property type="entry name" value="LIPASE MATURATION FACTOR"/>
    <property type="match status" value="1"/>
</dbReference>
<dbReference type="PANTHER" id="PTHR14463:SF5">
    <property type="entry name" value="LIPASE MATURATION FACTOR 2"/>
    <property type="match status" value="1"/>
</dbReference>
<dbReference type="Pfam" id="PF06762">
    <property type="entry name" value="LMF1"/>
    <property type="match status" value="1"/>
</dbReference>
<dbReference type="Pfam" id="PF25179">
    <property type="entry name" value="LMF1_C"/>
    <property type="match status" value="1"/>
</dbReference>
<sequence length="707" mass="79698">MAGSRLPRQLFLQGVAAVFMFAFASLYTQIPGLYGPEGILPARRTLRPQGKGRWQQLWETPTLLWEAPRLGLDTAQGLELLSLLGALVALGALLLSPLRHPVIYLLLWAAYLSACQVGQVFLYFQWDSLLLETGFLAVLVAPLRPASHRKEAPQGRQAGALPHEDLPFWLVRWLLFRLMFASGVVKLTSRCPAWWGLTALTYHYETQCLPTPAAWFAHHLPVWLHKLSVVATFLIEIAVPPLFFAPIRRLRLAAFYSQVLLQVLIIITGNYNFFNLMTLVLTTALLDDQHLAAEPGHGSRKKTATSWPKALLATLSLLLELAVYGLLAYGTVHYFGLEVDWQQRTIHSRTTFTFHQFSQWLKTLTLPTVWLGVASLVWELLSALWRWTQVRGWLRKLSAVVQLSLVGTATVALFLISLVPYSYVEPGTHGRLWTGAHRLFGAVEHLQLANSYGLFRRMTGLGGRPEVVLEGSYDGHHWTEIEFMYKPGNLSRPPPVVVPHQPRLDWQMWFAALGPHTHSPWFTSLVLRLLQGKEPVIRLVQSQVARYPFHKQPPTYVRAQRYKYWFSQPGEQGQWWRRQWVEEFFPSVSLGDPTLETLLRQFGLQEKSPPRTRSANSTLAQALHWTRSQLSPLEAPALLWGLLMAVGAVRFVQALLAPCSLRSSPLAPVSGEKRRPASQKDSGAASEQATAAPNPCSSSSRTTRRKK</sequence>
<keyword id="KW-0025">Alternative splicing</keyword>
<keyword id="KW-0256">Endoplasmic reticulum</keyword>
<keyword id="KW-0325">Glycoprotein</keyword>
<keyword id="KW-0472">Membrane</keyword>
<keyword id="KW-1267">Proteomics identification</keyword>
<keyword id="KW-1185">Reference proteome</keyword>
<keyword id="KW-0812">Transmembrane</keyword>
<keyword id="KW-1133">Transmembrane helix</keyword>
<evidence type="ECO:0000250" key="1"/>
<evidence type="ECO:0000255" key="2"/>
<evidence type="ECO:0000256" key="3">
    <source>
        <dbReference type="SAM" id="MobiDB-lite"/>
    </source>
</evidence>
<evidence type="ECO:0000269" key="4">
    <source>
    </source>
</evidence>
<evidence type="ECO:0000303" key="5">
    <source>
    </source>
</evidence>
<evidence type="ECO:0000303" key="6">
    <source>
    </source>
</evidence>
<evidence type="ECO:0000305" key="7"/>
<feature type="chain" id="PRO_0000324510" description="Lipase maturation factor 2">
    <location>
        <begin position="1"/>
        <end position="707"/>
    </location>
</feature>
<feature type="transmembrane region" description="Helical" evidence="2">
    <location>
        <begin position="10"/>
        <end position="30"/>
    </location>
</feature>
<feature type="transmembrane region" description="Helical" evidence="2">
    <location>
        <begin position="78"/>
        <end position="98"/>
    </location>
</feature>
<feature type="transmembrane region" description="Helical" evidence="2">
    <location>
        <begin position="102"/>
        <end position="122"/>
    </location>
</feature>
<feature type="transmembrane region" description="Helical" evidence="2">
    <location>
        <begin position="123"/>
        <end position="143"/>
    </location>
</feature>
<feature type="transmembrane region" description="Helical" evidence="2">
    <location>
        <begin position="165"/>
        <end position="185"/>
    </location>
</feature>
<feature type="transmembrane region" description="Helical" evidence="2">
    <location>
        <begin position="227"/>
        <end position="247"/>
    </location>
</feature>
<feature type="transmembrane region" description="Helical" evidence="2">
    <location>
        <begin position="259"/>
        <end position="279"/>
    </location>
</feature>
<feature type="transmembrane region" description="Helical" evidence="2">
    <location>
        <begin position="310"/>
        <end position="330"/>
    </location>
</feature>
<feature type="transmembrane region" description="Helical" evidence="2">
    <location>
        <begin position="364"/>
        <end position="384"/>
    </location>
</feature>
<feature type="transmembrane region" description="Helical" evidence="2">
    <location>
        <begin position="399"/>
        <end position="419"/>
    </location>
</feature>
<feature type="transmembrane region" description="Helical" evidence="2">
    <location>
        <begin position="637"/>
        <end position="657"/>
    </location>
</feature>
<feature type="region of interest" description="Disordered" evidence="3">
    <location>
        <begin position="665"/>
        <end position="707"/>
    </location>
</feature>
<feature type="compositionally biased region" description="Polar residues" evidence="3">
    <location>
        <begin position="679"/>
        <end position="691"/>
    </location>
</feature>
<feature type="glycosylation site" description="N-linked (GlcNAc...) asparagine" evidence="2">
    <location>
        <position position="489"/>
    </location>
</feature>
<feature type="glycosylation site" description="N-linked (GlcNAc...) asparagine" evidence="2">
    <location>
        <position position="616"/>
    </location>
</feature>
<feature type="splice variant" id="VSP_032254" description="In isoform 2." evidence="6">
    <original>MAGSRLPRQLFLQGVAAVFMFAFASLYTQIP</original>
    <variation>MTCPPT</variation>
    <location>
        <begin position="1"/>
        <end position="31"/>
    </location>
</feature>
<feature type="splice variant" id="VSP_032255" description="In isoform 3." evidence="5">
    <location>
        <begin position="392"/>
        <end position="504"/>
    </location>
</feature>
<feature type="sequence variant" id="VAR_039803" description="In a breast cancer sample; somatic mutation; dbSNP:rs376748648." evidence="4">
    <original>P</original>
    <variation>L</variation>
    <location>
        <position position="68"/>
    </location>
</feature>
<feature type="sequence variant" id="VAR_039804" description="In dbSNP:rs8136495.">
    <original>T</original>
    <variation>M</variation>
    <location>
        <position position="479"/>
    </location>
</feature>
<feature type="sequence conflict" description="In Ref. 4; BAC85437." evidence="7" ref="4">
    <original>E</original>
    <variation>G</variation>
    <location>
        <position position="571"/>
    </location>
</feature>
<accession>Q9BU23</accession>
<accession>A6NEZ0</accession>
<accession>Q13392</accession>
<accession>Q6ZNR2</accession>
<accession>Q8WU74</accession>
<accession>Q96C62</accession>